<reference key="1">
    <citation type="journal article" date="2011" name="J. Bacteriol.">
        <title>Comparative genomics of 28 Salmonella enterica isolates: evidence for CRISPR-mediated adaptive sublineage evolution.</title>
        <authorList>
            <person name="Fricke W.F."/>
            <person name="Mammel M.K."/>
            <person name="McDermott P.F."/>
            <person name="Tartera C."/>
            <person name="White D.G."/>
            <person name="Leclerc J.E."/>
            <person name="Ravel J."/>
            <person name="Cebula T.A."/>
        </authorList>
    </citation>
    <scope>NUCLEOTIDE SEQUENCE [LARGE SCALE GENOMIC DNA]</scope>
    <source>
        <strain>SL254</strain>
    </source>
</reference>
<sequence>MSEKHPGPLVVEGKLSDAERMKLESNYLRGTIAEDLNDGLTGGFKGDNFLLIRFHGMYQQDDRDIRAERAAQKLEPRHAMLLRCRLPGGVITTTQWQAIDKFAADNTIYGSIRLTNRQTFQFHGILKKNVKPVHQMLHSVGLDALATANDMNRNVLCTSNPYESQLHAEAYEWAKKISEHLLPRTRAYAEIWLDQEKVATTDEEPILGATYLPRKFKTTVVIPPQNDIDLHANDMNFVAIAENGKLVGFNLLVGGGLSIEHGNKKTYARTASEFGYLPLEHTLAVAEAVVTTQRDWGNRTDRKNAKTKYTLERVGVDTFKEEVERRAGIKFEPIRPYEFTGRGDRIGWVKGIDDKWHLTLFIENGRILDYPGRPLKTGLLEIAKIHQGEFRITANQNLIIASVPESQKAKIETLARDHGLMNAVSAQRENSMACVSFPTCPLAMAEAERFLPSFTDKVEAILEKHGIPDEHIVMRVTGCPNGCGRAMLAEIGLVGKAPGRYNLHLGGNRIGSRIPRMYKENITEPDILASLDELIGRWAKEREAGEGFGDFTVRAGIIRPVLDPARDFWE</sequence>
<comment type="function">
    <text evidence="1">Component of the sulfite reductase complex that catalyzes the 6-electron reduction of sulfite to sulfide. This is one of several activities required for the biosynthesis of L-cysteine from sulfate.</text>
</comment>
<comment type="catalytic activity">
    <reaction evidence="1">
        <text>hydrogen sulfide + 3 NADP(+) + 3 H2O = sulfite + 3 NADPH + 4 H(+)</text>
        <dbReference type="Rhea" id="RHEA:13801"/>
        <dbReference type="ChEBI" id="CHEBI:15377"/>
        <dbReference type="ChEBI" id="CHEBI:15378"/>
        <dbReference type="ChEBI" id="CHEBI:17359"/>
        <dbReference type="ChEBI" id="CHEBI:29919"/>
        <dbReference type="ChEBI" id="CHEBI:57783"/>
        <dbReference type="ChEBI" id="CHEBI:58349"/>
        <dbReference type="EC" id="1.8.1.2"/>
    </reaction>
</comment>
<comment type="cofactor">
    <cofactor evidence="1">
        <name>siroheme</name>
        <dbReference type="ChEBI" id="CHEBI:60052"/>
    </cofactor>
    <text evidence="1">Binds 1 siroheme per subunit.</text>
</comment>
<comment type="cofactor">
    <cofactor evidence="1">
        <name>[4Fe-4S] cluster</name>
        <dbReference type="ChEBI" id="CHEBI:49883"/>
    </cofactor>
    <text evidence="1">Binds 1 [4Fe-4S] cluster per subunit.</text>
</comment>
<comment type="pathway">
    <text evidence="1">Sulfur metabolism; hydrogen sulfide biosynthesis; hydrogen sulfide from sulfite (NADPH route): step 1/1.</text>
</comment>
<comment type="subunit">
    <text evidence="1">Alpha(8)-beta(8). The alpha component is a flavoprotein, the beta component is a hemoprotein.</text>
</comment>
<comment type="similarity">
    <text evidence="1">Belongs to the nitrite and sulfite reductase 4Fe-4S domain family.</text>
</comment>
<protein>
    <recommendedName>
        <fullName evidence="1">Sulfite reductase [NADPH] hemoprotein beta-component</fullName>
        <shortName evidence="1">SiR-HP</shortName>
        <shortName evidence="1">SiRHP</shortName>
        <ecNumber evidence="1">1.8.1.2</ecNumber>
    </recommendedName>
</protein>
<evidence type="ECO:0000255" key="1">
    <source>
        <dbReference type="HAMAP-Rule" id="MF_01540"/>
    </source>
</evidence>
<dbReference type="EC" id="1.8.1.2" evidence="1"/>
<dbReference type="EMBL" id="CP001113">
    <property type="protein sequence ID" value="ACF63157.1"/>
    <property type="molecule type" value="Genomic_DNA"/>
</dbReference>
<dbReference type="RefSeq" id="WP_001290654.1">
    <property type="nucleotide sequence ID" value="NZ_CCMR01000001.1"/>
</dbReference>
<dbReference type="SMR" id="B4T474"/>
<dbReference type="KEGG" id="see:SNSL254_A3158"/>
<dbReference type="HOGENOM" id="CLU_001975_3_2_6"/>
<dbReference type="UniPathway" id="UPA00140">
    <property type="reaction ID" value="UER00207"/>
</dbReference>
<dbReference type="Proteomes" id="UP000008824">
    <property type="component" value="Chromosome"/>
</dbReference>
<dbReference type="GO" id="GO:0009337">
    <property type="term" value="C:sulfite reductase complex (NADPH)"/>
    <property type="evidence" value="ECO:0007669"/>
    <property type="project" value="InterPro"/>
</dbReference>
<dbReference type="GO" id="GO:0051539">
    <property type="term" value="F:4 iron, 4 sulfur cluster binding"/>
    <property type="evidence" value="ECO:0007669"/>
    <property type="project" value="UniProtKB-KW"/>
</dbReference>
<dbReference type="GO" id="GO:0020037">
    <property type="term" value="F:heme binding"/>
    <property type="evidence" value="ECO:0007669"/>
    <property type="project" value="InterPro"/>
</dbReference>
<dbReference type="GO" id="GO:0046872">
    <property type="term" value="F:metal ion binding"/>
    <property type="evidence" value="ECO:0007669"/>
    <property type="project" value="UniProtKB-KW"/>
</dbReference>
<dbReference type="GO" id="GO:0050661">
    <property type="term" value="F:NADP binding"/>
    <property type="evidence" value="ECO:0007669"/>
    <property type="project" value="InterPro"/>
</dbReference>
<dbReference type="GO" id="GO:0050311">
    <property type="term" value="F:sulfite reductase (ferredoxin) activity"/>
    <property type="evidence" value="ECO:0007669"/>
    <property type="project" value="TreeGrafter"/>
</dbReference>
<dbReference type="GO" id="GO:0004783">
    <property type="term" value="F:sulfite reductase (NADPH) activity"/>
    <property type="evidence" value="ECO:0007669"/>
    <property type="project" value="UniProtKB-UniRule"/>
</dbReference>
<dbReference type="GO" id="GO:0019344">
    <property type="term" value="P:cysteine biosynthetic process"/>
    <property type="evidence" value="ECO:0007669"/>
    <property type="project" value="UniProtKB-KW"/>
</dbReference>
<dbReference type="GO" id="GO:0070814">
    <property type="term" value="P:hydrogen sulfide biosynthetic process"/>
    <property type="evidence" value="ECO:0007669"/>
    <property type="project" value="UniProtKB-UniRule"/>
</dbReference>
<dbReference type="GO" id="GO:0000103">
    <property type="term" value="P:sulfate assimilation"/>
    <property type="evidence" value="ECO:0007669"/>
    <property type="project" value="UniProtKB-UniRule"/>
</dbReference>
<dbReference type="FunFam" id="3.30.413.10:FF:000003">
    <property type="entry name" value="Sulfite reductase [NADPH] hemoprotein beta-component"/>
    <property type="match status" value="1"/>
</dbReference>
<dbReference type="FunFam" id="3.30.413.10:FF:000004">
    <property type="entry name" value="Sulfite reductase [NADPH] hemoprotein beta-component"/>
    <property type="match status" value="1"/>
</dbReference>
<dbReference type="Gene3D" id="3.30.413.10">
    <property type="entry name" value="Sulfite Reductase Hemoprotein, domain 1"/>
    <property type="match status" value="2"/>
</dbReference>
<dbReference type="HAMAP" id="MF_01540">
    <property type="entry name" value="CysI"/>
    <property type="match status" value="1"/>
</dbReference>
<dbReference type="InterPro" id="IPR011786">
    <property type="entry name" value="CysI"/>
</dbReference>
<dbReference type="InterPro" id="IPR005117">
    <property type="entry name" value="NiRdtase/SiRdtase_haem-b_fer"/>
</dbReference>
<dbReference type="InterPro" id="IPR036136">
    <property type="entry name" value="Nit/Sulf_reduc_fer-like_dom_sf"/>
</dbReference>
<dbReference type="InterPro" id="IPR006067">
    <property type="entry name" value="NO2/SO3_Rdtase_4Fe4S_dom"/>
</dbReference>
<dbReference type="InterPro" id="IPR045169">
    <property type="entry name" value="NO2/SO3_Rdtase_4Fe4S_prot"/>
</dbReference>
<dbReference type="InterPro" id="IPR045854">
    <property type="entry name" value="NO2/SO3_Rdtase_4Fe4S_sf"/>
</dbReference>
<dbReference type="InterPro" id="IPR006066">
    <property type="entry name" value="NO2/SO3_Rdtase_FeS/sirohaem_BS"/>
</dbReference>
<dbReference type="NCBIfam" id="TIGR02041">
    <property type="entry name" value="CysI"/>
    <property type="match status" value="1"/>
</dbReference>
<dbReference type="NCBIfam" id="NF010029">
    <property type="entry name" value="PRK13504.1"/>
    <property type="match status" value="1"/>
</dbReference>
<dbReference type="PANTHER" id="PTHR11493:SF47">
    <property type="entry name" value="SULFITE REDUCTASE [NADPH] SUBUNIT BETA"/>
    <property type="match status" value="1"/>
</dbReference>
<dbReference type="PANTHER" id="PTHR11493">
    <property type="entry name" value="SULFITE REDUCTASE [NADPH] SUBUNIT BETA-RELATED"/>
    <property type="match status" value="1"/>
</dbReference>
<dbReference type="Pfam" id="PF01077">
    <property type="entry name" value="NIR_SIR"/>
    <property type="match status" value="1"/>
</dbReference>
<dbReference type="Pfam" id="PF03460">
    <property type="entry name" value="NIR_SIR_ferr"/>
    <property type="match status" value="2"/>
</dbReference>
<dbReference type="PRINTS" id="PR00397">
    <property type="entry name" value="SIROHAEM"/>
</dbReference>
<dbReference type="SUPFAM" id="SSF56014">
    <property type="entry name" value="Nitrite and sulphite reductase 4Fe-4S domain-like"/>
    <property type="match status" value="2"/>
</dbReference>
<dbReference type="SUPFAM" id="SSF55124">
    <property type="entry name" value="Nitrite/Sulfite reductase N-terminal domain-like"/>
    <property type="match status" value="2"/>
</dbReference>
<dbReference type="PROSITE" id="PS00365">
    <property type="entry name" value="NIR_SIR"/>
    <property type="match status" value="1"/>
</dbReference>
<feature type="chain" id="PRO_1000146658" description="Sulfite reductase [NADPH] hemoprotein beta-component">
    <location>
        <begin position="1"/>
        <end position="570"/>
    </location>
</feature>
<feature type="binding site" evidence="1">
    <location>
        <position position="434"/>
    </location>
    <ligand>
        <name>[4Fe-4S] cluster</name>
        <dbReference type="ChEBI" id="CHEBI:49883"/>
    </ligand>
</feature>
<feature type="binding site" evidence="1">
    <location>
        <position position="440"/>
    </location>
    <ligand>
        <name>[4Fe-4S] cluster</name>
        <dbReference type="ChEBI" id="CHEBI:49883"/>
    </ligand>
</feature>
<feature type="binding site" evidence="1">
    <location>
        <position position="479"/>
    </location>
    <ligand>
        <name>[4Fe-4S] cluster</name>
        <dbReference type="ChEBI" id="CHEBI:49883"/>
    </ligand>
</feature>
<feature type="binding site" evidence="1">
    <location>
        <position position="483"/>
    </location>
    <ligand>
        <name>[4Fe-4S] cluster</name>
        <dbReference type="ChEBI" id="CHEBI:49883"/>
    </ligand>
</feature>
<feature type="binding site" description="axial binding residue" evidence="1">
    <location>
        <position position="483"/>
    </location>
    <ligand>
        <name>siroheme</name>
        <dbReference type="ChEBI" id="CHEBI:60052"/>
    </ligand>
    <ligandPart>
        <name>Fe</name>
        <dbReference type="ChEBI" id="CHEBI:18248"/>
    </ligandPart>
</feature>
<keyword id="KW-0004">4Fe-4S</keyword>
<keyword id="KW-0028">Amino-acid biosynthesis</keyword>
<keyword id="KW-0198">Cysteine biosynthesis</keyword>
<keyword id="KW-0349">Heme</keyword>
<keyword id="KW-0408">Iron</keyword>
<keyword id="KW-0411">Iron-sulfur</keyword>
<keyword id="KW-0479">Metal-binding</keyword>
<keyword id="KW-0521">NADP</keyword>
<keyword id="KW-0560">Oxidoreductase</keyword>
<name>CYSI_SALNS</name>
<organism>
    <name type="scientific">Salmonella newport (strain SL254)</name>
    <dbReference type="NCBI Taxonomy" id="423368"/>
    <lineage>
        <taxon>Bacteria</taxon>
        <taxon>Pseudomonadati</taxon>
        <taxon>Pseudomonadota</taxon>
        <taxon>Gammaproteobacteria</taxon>
        <taxon>Enterobacterales</taxon>
        <taxon>Enterobacteriaceae</taxon>
        <taxon>Salmonella</taxon>
    </lineage>
</organism>
<gene>
    <name evidence="1" type="primary">cysI</name>
    <name type="ordered locus">SNSL254_A3158</name>
</gene>
<accession>B4T474</accession>
<proteinExistence type="inferred from homology"/>